<sequence>MRKKKFLSKVSFGSLFLLCGTVLSACTGIQADLRNLIKEATGKDIDVYKAIKTTEGKKNMITSLKKSYKVNPKDTTKLLLDAWKQSAEKGELGIPDFDFDDVIYPASKDPFTMERKIEYFQMTYQSFKDLSIEAKLSYTFNWFGDYSSGDFTAKKGDKHYFDLFPKIKSNSDPGKQFTTEKFLTKEEKIKVNGKEITRNLEWIEFSASLSFSLKGKDDVSEKSVNKFLSTFANNTEGYSSDINLFIYLEYLIK</sequence>
<feature type="signal peptide" evidence="1">
    <location>
        <begin position="1"/>
        <end position="25"/>
    </location>
</feature>
<feature type="chain" id="PRO_0000014057" description="Uncharacterized lipoprotein MPN_369">
    <location>
        <begin position="26"/>
        <end position="253"/>
    </location>
</feature>
<feature type="lipid moiety-binding region" description="N-palmitoyl cysteine" evidence="1">
    <location>
        <position position="26"/>
    </location>
</feature>
<feature type="lipid moiety-binding region" description="S-diacylglycerol cysteine" evidence="1">
    <location>
        <position position="26"/>
    </location>
</feature>
<organism>
    <name type="scientific">Mycoplasma pneumoniae (strain ATCC 29342 / M129 / Subtype 1)</name>
    <name type="common">Mycoplasmoides pneumoniae</name>
    <dbReference type="NCBI Taxonomy" id="272634"/>
    <lineage>
        <taxon>Bacteria</taxon>
        <taxon>Bacillati</taxon>
        <taxon>Mycoplasmatota</taxon>
        <taxon>Mycoplasmoidales</taxon>
        <taxon>Mycoplasmoidaceae</taxon>
        <taxon>Mycoplasmoides</taxon>
    </lineage>
</organism>
<keyword id="KW-1003">Cell membrane</keyword>
<keyword id="KW-0449">Lipoprotein</keyword>
<keyword id="KW-0472">Membrane</keyword>
<keyword id="KW-0564">Palmitate</keyword>
<keyword id="KW-1185">Reference proteome</keyword>
<keyword id="KW-0732">Signal</keyword>
<comment type="subcellular location">
    <subcellularLocation>
        <location evidence="1">Cell membrane</location>
        <topology evidence="1">Lipid-anchor</topology>
    </subcellularLocation>
</comment>
<comment type="similarity">
    <text evidence="2">Belongs to the MG439/MG440 family.</text>
</comment>
<gene>
    <name type="ordered locus">MPN_369</name>
    <name type="ORF">H91_orf253</name>
    <name type="ORF">MP467</name>
</gene>
<name>Y369_MYCPN</name>
<protein>
    <recommendedName>
        <fullName>Uncharacterized lipoprotein MPN_369</fullName>
    </recommendedName>
</protein>
<dbReference type="EMBL" id="U00089">
    <property type="protein sequence ID" value="AAB96115.1"/>
    <property type="molecule type" value="Genomic_DNA"/>
</dbReference>
<dbReference type="PIR" id="S73793">
    <property type="entry name" value="S73793"/>
</dbReference>
<dbReference type="RefSeq" id="NP_110057.1">
    <property type="nucleotide sequence ID" value="NC_000912.1"/>
</dbReference>
<dbReference type="RefSeq" id="WP_010874725.1">
    <property type="nucleotide sequence ID" value="NC_000912.1"/>
</dbReference>
<dbReference type="STRING" id="272634.MPN_369"/>
<dbReference type="EnsemblBacteria" id="AAB96115">
    <property type="protein sequence ID" value="AAB96115"/>
    <property type="gene ID" value="MPN_369"/>
</dbReference>
<dbReference type="KEGG" id="mpn:MPN_369"/>
<dbReference type="PATRIC" id="fig|272634.6.peg.398"/>
<dbReference type="HOGENOM" id="CLU_1198717_0_0_14"/>
<dbReference type="BioCyc" id="MPNE272634:G1GJ3-580-MONOMER"/>
<dbReference type="Proteomes" id="UP000000808">
    <property type="component" value="Chromosome"/>
</dbReference>
<dbReference type="GO" id="GO:0005886">
    <property type="term" value="C:plasma membrane"/>
    <property type="evidence" value="ECO:0007669"/>
    <property type="project" value="UniProtKB-SubCell"/>
</dbReference>
<dbReference type="InterPro" id="IPR001595">
    <property type="entry name" value="Lipoprotein_3"/>
</dbReference>
<dbReference type="Pfam" id="PF00938">
    <property type="entry name" value="Lipoprotein_3"/>
    <property type="match status" value="1"/>
</dbReference>
<dbReference type="PROSITE" id="PS51257">
    <property type="entry name" value="PROKAR_LIPOPROTEIN"/>
    <property type="match status" value="1"/>
</dbReference>
<evidence type="ECO:0000255" key="1">
    <source>
        <dbReference type="PROSITE-ProRule" id="PRU00303"/>
    </source>
</evidence>
<evidence type="ECO:0000305" key="2"/>
<accession>P75412</accession>
<proteinExistence type="inferred from homology"/>
<reference key="1">
    <citation type="journal article" date="1996" name="Nucleic Acids Res.">
        <title>Complete sequence analysis of the genome of the bacterium Mycoplasma pneumoniae.</title>
        <authorList>
            <person name="Himmelreich R."/>
            <person name="Hilbert H."/>
            <person name="Plagens H."/>
            <person name="Pirkl E."/>
            <person name="Li B.-C."/>
            <person name="Herrmann R."/>
        </authorList>
    </citation>
    <scope>NUCLEOTIDE SEQUENCE [LARGE SCALE GENOMIC DNA]</scope>
    <source>
        <strain>ATCC 29342 / M129 / Subtype 1</strain>
    </source>
</reference>